<evidence type="ECO:0000255" key="1">
    <source>
        <dbReference type="HAMAP-Rule" id="MF_00061"/>
    </source>
</evidence>
<gene>
    <name evidence="1" type="primary">ispE</name>
    <name type="ordered locus">Shal_3214</name>
</gene>
<protein>
    <recommendedName>
        <fullName evidence="1">4-diphosphocytidyl-2-C-methyl-D-erythritol kinase</fullName>
        <shortName evidence="1">CMK</shortName>
        <ecNumber evidence="1">2.7.1.148</ecNumber>
    </recommendedName>
    <alternativeName>
        <fullName evidence="1">4-(cytidine-5'-diphospho)-2-C-methyl-D-erythritol kinase</fullName>
    </alternativeName>
</protein>
<organism>
    <name type="scientific">Shewanella halifaxensis (strain HAW-EB4)</name>
    <dbReference type="NCBI Taxonomy" id="458817"/>
    <lineage>
        <taxon>Bacteria</taxon>
        <taxon>Pseudomonadati</taxon>
        <taxon>Pseudomonadota</taxon>
        <taxon>Gammaproteobacteria</taxon>
        <taxon>Alteromonadales</taxon>
        <taxon>Shewanellaceae</taxon>
        <taxon>Shewanella</taxon>
    </lineage>
</organism>
<name>ISPE_SHEHH</name>
<reference key="1">
    <citation type="submission" date="2008-01" db="EMBL/GenBank/DDBJ databases">
        <title>Complete sequence of Shewanella halifaxensis HAW-EB4.</title>
        <authorList>
            <consortium name="US DOE Joint Genome Institute"/>
            <person name="Copeland A."/>
            <person name="Lucas S."/>
            <person name="Lapidus A."/>
            <person name="Glavina del Rio T."/>
            <person name="Dalin E."/>
            <person name="Tice H."/>
            <person name="Bruce D."/>
            <person name="Goodwin L."/>
            <person name="Pitluck S."/>
            <person name="Sims D."/>
            <person name="Brettin T."/>
            <person name="Detter J.C."/>
            <person name="Han C."/>
            <person name="Kuske C.R."/>
            <person name="Schmutz J."/>
            <person name="Larimer F."/>
            <person name="Land M."/>
            <person name="Hauser L."/>
            <person name="Kyrpides N."/>
            <person name="Kim E."/>
            <person name="Zhao J.-S."/>
            <person name="Richardson P."/>
        </authorList>
    </citation>
    <scope>NUCLEOTIDE SEQUENCE [LARGE SCALE GENOMIC DNA]</scope>
    <source>
        <strain>HAW-EB4</strain>
    </source>
</reference>
<sequence>MTAPLSLGWPAPAKLNLFLHINARRHDGYHELQTLFQFVEHCDYLDFKVLDKPELKLHSNLAGVVADSDNLILKAAKSLQQHTKCQFGVEIWLDKRLPMGGGLGGGSSDAATTLVALNQLWETGLSATELCELGLKLGADVPVFINGFSAFAEGVGEKLQNVEPAEPWYLVLVPQVHVSTAEVFQDPELPRNTPKLSLESLMNSPWQNDCQSLVAKRHPQVAKTLGWLLEYAPSRMTGTGACVFGQFEQEQEAKDVLAKLPASIQGFVAKGANISPLMLRLAQC</sequence>
<dbReference type="EC" id="2.7.1.148" evidence="1"/>
<dbReference type="EMBL" id="CP000931">
    <property type="protein sequence ID" value="ABZ77761.1"/>
    <property type="molecule type" value="Genomic_DNA"/>
</dbReference>
<dbReference type="RefSeq" id="WP_012278284.1">
    <property type="nucleotide sequence ID" value="NC_010334.1"/>
</dbReference>
<dbReference type="SMR" id="B0TR30"/>
<dbReference type="STRING" id="458817.Shal_3214"/>
<dbReference type="KEGG" id="shl:Shal_3214"/>
<dbReference type="eggNOG" id="COG1947">
    <property type="taxonomic scope" value="Bacteria"/>
</dbReference>
<dbReference type="HOGENOM" id="CLU_053057_3_0_6"/>
<dbReference type="OrthoDB" id="9809438at2"/>
<dbReference type="UniPathway" id="UPA00056">
    <property type="reaction ID" value="UER00094"/>
</dbReference>
<dbReference type="Proteomes" id="UP000001317">
    <property type="component" value="Chromosome"/>
</dbReference>
<dbReference type="GO" id="GO:0050515">
    <property type="term" value="F:4-(cytidine 5'-diphospho)-2-C-methyl-D-erythritol kinase activity"/>
    <property type="evidence" value="ECO:0007669"/>
    <property type="project" value="UniProtKB-UniRule"/>
</dbReference>
<dbReference type="GO" id="GO:0005524">
    <property type="term" value="F:ATP binding"/>
    <property type="evidence" value="ECO:0007669"/>
    <property type="project" value="UniProtKB-UniRule"/>
</dbReference>
<dbReference type="GO" id="GO:0019288">
    <property type="term" value="P:isopentenyl diphosphate biosynthetic process, methylerythritol 4-phosphate pathway"/>
    <property type="evidence" value="ECO:0007669"/>
    <property type="project" value="UniProtKB-UniRule"/>
</dbReference>
<dbReference type="GO" id="GO:0016114">
    <property type="term" value="P:terpenoid biosynthetic process"/>
    <property type="evidence" value="ECO:0007669"/>
    <property type="project" value="InterPro"/>
</dbReference>
<dbReference type="Gene3D" id="3.30.230.10">
    <property type="match status" value="1"/>
</dbReference>
<dbReference type="Gene3D" id="3.30.70.890">
    <property type="entry name" value="GHMP kinase, C-terminal domain"/>
    <property type="match status" value="1"/>
</dbReference>
<dbReference type="HAMAP" id="MF_00061">
    <property type="entry name" value="IspE"/>
    <property type="match status" value="1"/>
</dbReference>
<dbReference type="InterPro" id="IPR013750">
    <property type="entry name" value="GHMP_kinase_C_dom"/>
</dbReference>
<dbReference type="InterPro" id="IPR036554">
    <property type="entry name" value="GHMP_kinase_C_sf"/>
</dbReference>
<dbReference type="InterPro" id="IPR006204">
    <property type="entry name" value="GHMP_kinase_N_dom"/>
</dbReference>
<dbReference type="InterPro" id="IPR004424">
    <property type="entry name" value="IspE"/>
</dbReference>
<dbReference type="InterPro" id="IPR020568">
    <property type="entry name" value="Ribosomal_Su5_D2-typ_SF"/>
</dbReference>
<dbReference type="InterPro" id="IPR014721">
    <property type="entry name" value="Ribsml_uS5_D2-typ_fold_subgr"/>
</dbReference>
<dbReference type="NCBIfam" id="TIGR00154">
    <property type="entry name" value="ispE"/>
    <property type="match status" value="1"/>
</dbReference>
<dbReference type="PANTHER" id="PTHR43527">
    <property type="entry name" value="4-DIPHOSPHOCYTIDYL-2-C-METHYL-D-ERYTHRITOL KINASE, CHLOROPLASTIC"/>
    <property type="match status" value="1"/>
</dbReference>
<dbReference type="PANTHER" id="PTHR43527:SF2">
    <property type="entry name" value="4-DIPHOSPHOCYTIDYL-2-C-METHYL-D-ERYTHRITOL KINASE, CHLOROPLASTIC"/>
    <property type="match status" value="1"/>
</dbReference>
<dbReference type="Pfam" id="PF08544">
    <property type="entry name" value="GHMP_kinases_C"/>
    <property type="match status" value="1"/>
</dbReference>
<dbReference type="Pfam" id="PF00288">
    <property type="entry name" value="GHMP_kinases_N"/>
    <property type="match status" value="1"/>
</dbReference>
<dbReference type="PIRSF" id="PIRSF010376">
    <property type="entry name" value="IspE"/>
    <property type="match status" value="1"/>
</dbReference>
<dbReference type="SUPFAM" id="SSF55060">
    <property type="entry name" value="GHMP Kinase, C-terminal domain"/>
    <property type="match status" value="1"/>
</dbReference>
<dbReference type="SUPFAM" id="SSF54211">
    <property type="entry name" value="Ribosomal protein S5 domain 2-like"/>
    <property type="match status" value="1"/>
</dbReference>
<comment type="function">
    <text evidence="1">Catalyzes the phosphorylation of the position 2 hydroxy group of 4-diphosphocytidyl-2C-methyl-D-erythritol.</text>
</comment>
<comment type="catalytic activity">
    <reaction evidence="1">
        <text>4-CDP-2-C-methyl-D-erythritol + ATP = 4-CDP-2-C-methyl-D-erythritol 2-phosphate + ADP + H(+)</text>
        <dbReference type="Rhea" id="RHEA:18437"/>
        <dbReference type="ChEBI" id="CHEBI:15378"/>
        <dbReference type="ChEBI" id="CHEBI:30616"/>
        <dbReference type="ChEBI" id="CHEBI:57823"/>
        <dbReference type="ChEBI" id="CHEBI:57919"/>
        <dbReference type="ChEBI" id="CHEBI:456216"/>
        <dbReference type="EC" id="2.7.1.148"/>
    </reaction>
</comment>
<comment type="pathway">
    <text evidence="1">Isoprenoid biosynthesis; isopentenyl diphosphate biosynthesis via DXP pathway; isopentenyl diphosphate from 1-deoxy-D-xylulose 5-phosphate: step 3/6.</text>
</comment>
<comment type="similarity">
    <text evidence="1">Belongs to the GHMP kinase family. IspE subfamily.</text>
</comment>
<accession>B0TR30</accession>
<proteinExistence type="inferred from homology"/>
<keyword id="KW-0067">ATP-binding</keyword>
<keyword id="KW-0414">Isoprene biosynthesis</keyword>
<keyword id="KW-0418">Kinase</keyword>
<keyword id="KW-0547">Nucleotide-binding</keyword>
<keyword id="KW-0808">Transferase</keyword>
<feature type="chain" id="PRO_1000075059" description="4-diphosphocytidyl-2-C-methyl-D-erythritol kinase">
    <location>
        <begin position="1"/>
        <end position="284"/>
    </location>
</feature>
<feature type="active site" evidence="1">
    <location>
        <position position="14"/>
    </location>
</feature>
<feature type="active site" evidence="1">
    <location>
        <position position="140"/>
    </location>
</feature>
<feature type="binding site" evidence="1">
    <location>
        <begin position="98"/>
        <end position="108"/>
    </location>
    <ligand>
        <name>ATP</name>
        <dbReference type="ChEBI" id="CHEBI:30616"/>
    </ligand>
</feature>